<feature type="chain" id="PRO_1000130336" description="Ribosomal RNA small subunit methyltransferase A">
    <location>
        <begin position="1"/>
        <end position="264"/>
    </location>
</feature>
<feature type="binding site" evidence="1">
    <location>
        <position position="15"/>
    </location>
    <ligand>
        <name>S-adenosyl-L-methionine</name>
        <dbReference type="ChEBI" id="CHEBI:59789"/>
    </ligand>
</feature>
<feature type="binding site" evidence="1">
    <location>
        <position position="17"/>
    </location>
    <ligand>
        <name>S-adenosyl-L-methionine</name>
        <dbReference type="ChEBI" id="CHEBI:59789"/>
    </ligand>
</feature>
<feature type="binding site" evidence="1">
    <location>
        <position position="42"/>
    </location>
    <ligand>
        <name>S-adenosyl-L-methionine</name>
        <dbReference type="ChEBI" id="CHEBI:59789"/>
    </ligand>
</feature>
<feature type="binding site" evidence="1">
    <location>
        <position position="64"/>
    </location>
    <ligand>
        <name>S-adenosyl-L-methionine</name>
        <dbReference type="ChEBI" id="CHEBI:59789"/>
    </ligand>
</feature>
<feature type="binding site" evidence="1">
    <location>
        <position position="90"/>
    </location>
    <ligand>
        <name>S-adenosyl-L-methionine</name>
        <dbReference type="ChEBI" id="CHEBI:59789"/>
    </ligand>
</feature>
<feature type="binding site" evidence="1">
    <location>
        <position position="109"/>
    </location>
    <ligand>
        <name>S-adenosyl-L-methionine</name>
        <dbReference type="ChEBI" id="CHEBI:59789"/>
    </ligand>
</feature>
<gene>
    <name evidence="1" type="primary">rsmA</name>
    <name evidence="1" type="synonym">ksgA</name>
    <name type="ordered locus">WP0531</name>
</gene>
<accession>B3CPY6</accession>
<organism>
    <name type="scientific">Wolbachia pipientis subsp. Culex pipiens (strain wPip)</name>
    <dbReference type="NCBI Taxonomy" id="570417"/>
    <lineage>
        <taxon>Bacteria</taxon>
        <taxon>Pseudomonadati</taxon>
        <taxon>Pseudomonadota</taxon>
        <taxon>Alphaproteobacteria</taxon>
        <taxon>Rickettsiales</taxon>
        <taxon>Anaplasmataceae</taxon>
        <taxon>Wolbachieae</taxon>
        <taxon>Wolbachia</taxon>
    </lineage>
</organism>
<evidence type="ECO:0000255" key="1">
    <source>
        <dbReference type="HAMAP-Rule" id="MF_00607"/>
    </source>
</evidence>
<comment type="function">
    <text evidence="1">Specifically dimethylates two adjacent adenosines (A1518 and A1519) in the loop of a conserved hairpin near the 3'-end of 16S rRNA in the 30S particle. May play a critical role in biogenesis of 30S subunits.</text>
</comment>
<comment type="catalytic activity">
    <reaction evidence="1">
        <text>adenosine(1518)/adenosine(1519) in 16S rRNA + 4 S-adenosyl-L-methionine = N(6)-dimethyladenosine(1518)/N(6)-dimethyladenosine(1519) in 16S rRNA + 4 S-adenosyl-L-homocysteine + 4 H(+)</text>
        <dbReference type="Rhea" id="RHEA:19609"/>
        <dbReference type="Rhea" id="RHEA-COMP:10232"/>
        <dbReference type="Rhea" id="RHEA-COMP:10233"/>
        <dbReference type="ChEBI" id="CHEBI:15378"/>
        <dbReference type="ChEBI" id="CHEBI:57856"/>
        <dbReference type="ChEBI" id="CHEBI:59789"/>
        <dbReference type="ChEBI" id="CHEBI:74411"/>
        <dbReference type="ChEBI" id="CHEBI:74493"/>
        <dbReference type="EC" id="2.1.1.182"/>
    </reaction>
</comment>
<comment type="subcellular location">
    <subcellularLocation>
        <location evidence="1">Cytoplasm</location>
    </subcellularLocation>
</comment>
<comment type="similarity">
    <text evidence="1">Belongs to the class I-like SAM-binding methyltransferase superfamily. rRNA adenine N(6)-methyltransferase family. RsmA subfamily.</text>
</comment>
<dbReference type="EC" id="2.1.1.182" evidence="1"/>
<dbReference type="EMBL" id="AM999887">
    <property type="protein sequence ID" value="CAQ54639.1"/>
    <property type="molecule type" value="Genomic_DNA"/>
</dbReference>
<dbReference type="RefSeq" id="WP_007301967.1">
    <property type="nucleotide sequence ID" value="NC_010981.1"/>
</dbReference>
<dbReference type="SMR" id="B3CPY6"/>
<dbReference type="KEGG" id="wpi:WP0531"/>
<dbReference type="eggNOG" id="COG0030">
    <property type="taxonomic scope" value="Bacteria"/>
</dbReference>
<dbReference type="HOGENOM" id="CLU_041220_0_1_5"/>
<dbReference type="Proteomes" id="UP000008814">
    <property type="component" value="Chromosome"/>
</dbReference>
<dbReference type="GO" id="GO:0005829">
    <property type="term" value="C:cytosol"/>
    <property type="evidence" value="ECO:0007669"/>
    <property type="project" value="TreeGrafter"/>
</dbReference>
<dbReference type="GO" id="GO:0052908">
    <property type="term" value="F:16S rRNA (adenine(1518)-N(6)/adenine(1519)-N(6))-dimethyltransferase activity"/>
    <property type="evidence" value="ECO:0007669"/>
    <property type="project" value="UniProtKB-EC"/>
</dbReference>
<dbReference type="GO" id="GO:0003723">
    <property type="term" value="F:RNA binding"/>
    <property type="evidence" value="ECO:0007669"/>
    <property type="project" value="UniProtKB-KW"/>
</dbReference>
<dbReference type="CDD" id="cd02440">
    <property type="entry name" value="AdoMet_MTases"/>
    <property type="match status" value="1"/>
</dbReference>
<dbReference type="FunFam" id="1.10.8.100:FF:000001">
    <property type="entry name" value="Ribosomal RNA small subunit methyltransferase A"/>
    <property type="match status" value="1"/>
</dbReference>
<dbReference type="Gene3D" id="1.10.8.100">
    <property type="entry name" value="Ribosomal RNA adenine dimethylase-like, domain 2"/>
    <property type="match status" value="1"/>
</dbReference>
<dbReference type="Gene3D" id="3.40.50.150">
    <property type="entry name" value="Vaccinia Virus protein VP39"/>
    <property type="match status" value="1"/>
</dbReference>
<dbReference type="HAMAP" id="MF_00607">
    <property type="entry name" value="16SrRNA_methyltr_A"/>
    <property type="match status" value="1"/>
</dbReference>
<dbReference type="InterPro" id="IPR001737">
    <property type="entry name" value="KsgA/Erm"/>
</dbReference>
<dbReference type="InterPro" id="IPR023165">
    <property type="entry name" value="rRNA_Ade_diMease-like_C"/>
</dbReference>
<dbReference type="InterPro" id="IPR020596">
    <property type="entry name" value="rRNA_Ade_Mease_Trfase_CS"/>
</dbReference>
<dbReference type="InterPro" id="IPR020598">
    <property type="entry name" value="rRNA_Ade_methylase_Trfase_N"/>
</dbReference>
<dbReference type="InterPro" id="IPR011530">
    <property type="entry name" value="rRNA_adenine_dimethylase"/>
</dbReference>
<dbReference type="InterPro" id="IPR029063">
    <property type="entry name" value="SAM-dependent_MTases_sf"/>
</dbReference>
<dbReference type="NCBIfam" id="TIGR00755">
    <property type="entry name" value="ksgA"/>
    <property type="match status" value="1"/>
</dbReference>
<dbReference type="PANTHER" id="PTHR11727">
    <property type="entry name" value="DIMETHYLADENOSINE TRANSFERASE"/>
    <property type="match status" value="1"/>
</dbReference>
<dbReference type="PANTHER" id="PTHR11727:SF7">
    <property type="entry name" value="DIMETHYLADENOSINE TRANSFERASE-RELATED"/>
    <property type="match status" value="1"/>
</dbReference>
<dbReference type="Pfam" id="PF00398">
    <property type="entry name" value="RrnaAD"/>
    <property type="match status" value="1"/>
</dbReference>
<dbReference type="SMART" id="SM00650">
    <property type="entry name" value="rADc"/>
    <property type="match status" value="1"/>
</dbReference>
<dbReference type="SUPFAM" id="SSF53335">
    <property type="entry name" value="S-adenosyl-L-methionine-dependent methyltransferases"/>
    <property type="match status" value="1"/>
</dbReference>
<dbReference type="PROSITE" id="PS01131">
    <property type="entry name" value="RRNA_A_DIMETH"/>
    <property type="match status" value="1"/>
</dbReference>
<dbReference type="PROSITE" id="PS51689">
    <property type="entry name" value="SAM_RNA_A_N6_MT"/>
    <property type="match status" value="1"/>
</dbReference>
<name>RSMA_WOLPP</name>
<reference key="1">
    <citation type="journal article" date="2008" name="Mol. Biol. Evol.">
        <title>Genome evolution of Wolbachia strain wPip from the Culex pipiens group.</title>
        <authorList>
            <person name="Klasson L."/>
            <person name="Walker T."/>
            <person name="Sebaihia M."/>
            <person name="Sanders M.J."/>
            <person name="Quail M.A."/>
            <person name="Lord A."/>
            <person name="Sanders S."/>
            <person name="Earl J."/>
            <person name="O'Neill S.L."/>
            <person name="Thomson N."/>
            <person name="Sinkins S.P."/>
            <person name="Parkhill J."/>
        </authorList>
    </citation>
    <scope>NUCLEOTIDE SEQUENCE [LARGE SCALE GENOMIC DNA]</scope>
    <source>
        <strain>wPip</strain>
    </source>
</reference>
<sequence>MRKFLLKPKKSLGQNFILSNEIIKRIVALAGSLKDFNVIEIGPGYGALTREILAYNPKFLLSIEKDSSLVKHHEQLLNEHQGKYRIIEADALNVVEKELVECPVKVIANLPYNISVALFLKWLNNIKFFTNLTLMFQKEVAERITAEPNSKDYGSLSVLSQLLCDIKKEFDIEPKEFFPRPKVYSSVITVKPLPTPRFAVNLETLTKLTRAVFAQRRKMLRNSLQSITSDVSTTLENAKLSGDERPESLTIEQFCLLANNIIMR</sequence>
<keyword id="KW-0963">Cytoplasm</keyword>
<keyword id="KW-0489">Methyltransferase</keyword>
<keyword id="KW-0694">RNA-binding</keyword>
<keyword id="KW-0698">rRNA processing</keyword>
<keyword id="KW-0949">S-adenosyl-L-methionine</keyword>
<keyword id="KW-0808">Transferase</keyword>
<proteinExistence type="inferred from homology"/>
<protein>
    <recommendedName>
        <fullName evidence="1">Ribosomal RNA small subunit methyltransferase A</fullName>
        <ecNumber evidence="1">2.1.1.182</ecNumber>
    </recommendedName>
    <alternativeName>
        <fullName evidence="1">16S rRNA (adenine(1518)-N(6)/adenine(1519)-N(6))-dimethyltransferase</fullName>
    </alternativeName>
    <alternativeName>
        <fullName evidence="1">16S rRNA dimethyladenosine transferase</fullName>
    </alternativeName>
    <alternativeName>
        <fullName evidence="1">16S rRNA dimethylase</fullName>
    </alternativeName>
    <alternativeName>
        <fullName evidence="1">S-adenosylmethionine-6-N', N'-adenosyl(rRNA) dimethyltransferase</fullName>
    </alternativeName>
</protein>